<accession>B1P1I4</accession>
<feature type="signal peptide" evidence="2">
    <location>
        <begin position="1"/>
        <end position="18"/>
    </location>
</feature>
<feature type="propeptide" id="PRO_0000398544" evidence="1">
    <location>
        <begin position="19"/>
        <end position="51"/>
    </location>
</feature>
<feature type="peptide" id="PRO_0000398545" description="U31-theraphotoxin-Cg1b">
    <location>
        <begin position="52"/>
        <end position="115"/>
    </location>
</feature>
<feature type="disulfide bond" evidence="3">
    <location>
        <begin position="52"/>
        <end position="67"/>
    </location>
</feature>
<feature type="disulfide bond" evidence="3">
    <location>
        <begin position="60"/>
        <end position="73"/>
    </location>
</feature>
<feature type="disulfide bond" evidence="3">
    <location>
        <begin position="64"/>
        <end position="113"/>
    </location>
</feature>
<feature type="disulfide bond" evidence="3">
    <location>
        <begin position="66"/>
        <end position="86"/>
    </location>
</feature>
<keyword id="KW-1015">Disulfide bond</keyword>
<keyword id="KW-0872">Ion channel impairing toxin</keyword>
<keyword id="KW-0960">Knottin</keyword>
<keyword id="KW-0964">Secreted</keyword>
<keyword id="KW-0732">Signal</keyword>
<keyword id="KW-0800">Toxin</keyword>
<comment type="function">
    <text>Probable ion channel inhibitor.</text>
</comment>
<comment type="subcellular location">
    <subcellularLocation>
        <location evidence="4">Secreted</location>
    </subcellularLocation>
</comment>
<comment type="tissue specificity">
    <text evidence="4">Expressed by the venom gland.</text>
</comment>
<comment type="domain">
    <text evidence="3">The presence of a 'disulfide through disulfide knot' structurally defines this protein as a knottin.</text>
</comment>
<comment type="similarity">
    <text evidence="3">Belongs to the neurotoxin 03 (Tx2) family. 02 subfamily.</text>
</comment>
<evidence type="ECO:0000250" key="1"/>
<evidence type="ECO:0000255" key="2"/>
<evidence type="ECO:0000305" key="3"/>
<evidence type="ECO:0000305" key="4">
    <source>
    </source>
</evidence>
<name>TX32C_CHIGU</name>
<proteinExistence type="inferred from homology"/>
<sequence>MKLCVIIIASLMVASVSGRLRKIKGTELDKKMLLEKLGHGMDIRFEETPRECSKKAGEKCESNCDCCGYSTLCGYITEGKEVKYQCMSKTSNNEILNTIGLGMNAIENMFSFCFR</sequence>
<reference key="1">
    <citation type="journal article" date="2008" name="Cell. Mol. Life Sci.">
        <title>Molecular diversity and evolution of cystine knot toxins of the tarantula Chilobrachys jingzhao.</title>
        <authorList>
            <person name="Chen J."/>
            <person name="Deng M."/>
            <person name="He Q."/>
            <person name="Meng E."/>
            <person name="Jiang L."/>
            <person name="Liao Z."/>
            <person name="Rong M."/>
            <person name="Liang S."/>
        </authorList>
    </citation>
    <scope>NUCLEOTIDE SEQUENCE [LARGE SCALE MRNA]</scope>
    <source>
        <tissue>Venom gland</tissue>
    </source>
</reference>
<organism>
    <name type="scientific">Chilobrachys guangxiensis</name>
    <name type="common">Chinese earth tiger tarantula</name>
    <name type="synonym">Chilobrachys jingzhao</name>
    <dbReference type="NCBI Taxonomy" id="278060"/>
    <lineage>
        <taxon>Eukaryota</taxon>
        <taxon>Metazoa</taxon>
        <taxon>Ecdysozoa</taxon>
        <taxon>Arthropoda</taxon>
        <taxon>Chelicerata</taxon>
        <taxon>Arachnida</taxon>
        <taxon>Araneae</taxon>
        <taxon>Mygalomorphae</taxon>
        <taxon>Theraphosidae</taxon>
        <taxon>Chilobrachys</taxon>
    </lineage>
</organism>
<protein>
    <recommendedName>
        <fullName>U31-theraphotoxin-Cg1b</fullName>
        <shortName>U31-TRTX-Cg1b</shortName>
    </recommendedName>
    <alternativeName>
        <fullName>Jingzhaotoxin-65</fullName>
        <shortName>JZTX-65</shortName>
    </alternativeName>
</protein>
<dbReference type="EMBL" id="EU233915">
    <property type="protein sequence ID" value="ABY71734.1"/>
    <property type="molecule type" value="mRNA"/>
</dbReference>
<dbReference type="SMR" id="B1P1I4"/>
<dbReference type="ArachnoServer" id="AS000863">
    <property type="toxin name" value="U31-theraphotoxin-Cg1b"/>
</dbReference>
<dbReference type="GO" id="GO:0005576">
    <property type="term" value="C:extracellular region"/>
    <property type="evidence" value="ECO:0007669"/>
    <property type="project" value="UniProtKB-SubCell"/>
</dbReference>
<dbReference type="GO" id="GO:0099106">
    <property type="term" value="F:ion channel regulator activity"/>
    <property type="evidence" value="ECO:0007669"/>
    <property type="project" value="UniProtKB-KW"/>
</dbReference>
<dbReference type="GO" id="GO:0090729">
    <property type="term" value="F:toxin activity"/>
    <property type="evidence" value="ECO:0007669"/>
    <property type="project" value="UniProtKB-KW"/>
</dbReference>